<accession>Q8QGP3</accession>
<gene>
    <name type="primary">CPZ</name>
</gene>
<feature type="signal peptide" evidence="3">
    <location>
        <begin position="1"/>
        <end position="18"/>
    </location>
</feature>
<feature type="chain" id="PRO_0000252459" description="Carboxypeptidase Z">
    <location>
        <begin position="19"/>
        <end position="647"/>
    </location>
</feature>
<feature type="domain" description="FZ" evidence="4">
    <location>
        <begin position="35"/>
        <end position="157"/>
    </location>
</feature>
<feature type="domain" description="Peptidase M14" evidence="5">
    <location>
        <begin position="183"/>
        <end position="499"/>
    </location>
</feature>
<feature type="active site" description="Proton donor/acceptor" evidence="5">
    <location>
        <position position="469"/>
    </location>
</feature>
<feature type="binding site" evidence="5">
    <location>
        <position position="245"/>
    </location>
    <ligand>
        <name>Zn(2+)</name>
        <dbReference type="ChEBI" id="CHEBI:29105"/>
        <note>catalytic</note>
    </ligand>
</feature>
<feature type="binding site" evidence="5">
    <location>
        <position position="248"/>
    </location>
    <ligand>
        <name>Zn(2+)</name>
        <dbReference type="ChEBI" id="CHEBI:29105"/>
        <note>catalytic</note>
    </ligand>
</feature>
<feature type="binding site" evidence="5">
    <location>
        <position position="377"/>
    </location>
    <ligand>
        <name>Zn(2+)</name>
        <dbReference type="ChEBI" id="CHEBI:29105"/>
        <note>catalytic</note>
    </ligand>
</feature>
<feature type="glycosylation site" description="N-linked (GlcNAc...) asparagine" evidence="3">
    <location>
        <position position="278"/>
    </location>
</feature>
<feature type="disulfide bond" evidence="4">
    <location>
        <begin position="40"/>
        <end position="106"/>
    </location>
</feature>
<feature type="disulfide bond" evidence="4">
    <location>
        <begin position="48"/>
        <end position="99"/>
    </location>
</feature>
<feature type="disulfide bond" evidence="4">
    <location>
        <begin position="90"/>
        <end position="126"/>
    </location>
</feature>
<feature type="disulfide bond" evidence="4">
    <location>
        <begin position="115"/>
        <end position="154"/>
    </location>
</feature>
<feature type="disulfide bond" evidence="4">
    <location>
        <begin position="119"/>
        <end position="143"/>
    </location>
</feature>
<keyword id="KW-0121">Carboxypeptidase</keyword>
<keyword id="KW-0217">Developmental protein</keyword>
<keyword id="KW-1015">Disulfide bond</keyword>
<keyword id="KW-0272">Extracellular matrix</keyword>
<keyword id="KW-0325">Glycoprotein</keyword>
<keyword id="KW-0378">Hydrolase</keyword>
<keyword id="KW-0479">Metal-binding</keyword>
<keyword id="KW-0482">Metalloprotease</keyword>
<keyword id="KW-0645">Protease</keyword>
<keyword id="KW-1185">Reference proteome</keyword>
<keyword id="KW-0964">Secreted</keyword>
<keyword id="KW-0732">Signal</keyword>
<keyword id="KW-0879">Wnt signaling pathway</keyword>
<keyword id="KW-0862">Zinc</keyword>
<comment type="function">
    <text evidence="6">Cleaves substrates with C-terminal arginine residues. Modulates the Wnt signaling pathway, probably by cleaving some undefined protein. Regulates the development of skeletal elements during development, probably by activating WNT4.</text>
</comment>
<comment type="cofactor">
    <cofactor evidence="2">
        <name>Zn(2+)</name>
        <dbReference type="ChEBI" id="CHEBI:29105"/>
    </cofactor>
</comment>
<comment type="activity regulation">
    <text evidence="1">Inhibited by 2-mercaptomethyl-3-guanidinoethylthiopropanoic acid (MGTA) and guanidinoethylmercaptosuccinic acid (GEMSA). Inhibited by chelating agents such as EDTA and EGTA (By similarity).</text>
</comment>
<comment type="subunit">
    <text evidence="6">Interacts with WNT4 vie its FZ domain.</text>
</comment>
<comment type="subcellular location">
    <subcellularLocation>
        <location evidence="1">Secreted</location>
        <location evidence="1">Extracellular space</location>
        <location evidence="1">Extracellular matrix</location>
    </subcellularLocation>
</comment>
<comment type="tissue specificity">
    <text evidence="6">In the early embryo it is initially expressed throughout the somites and subsequently becomes restricted to the sclerotome. Expressed in somites, paraxial head mesoderm and apical ectodermal ridge.</text>
</comment>
<comment type="similarity">
    <text evidence="7">Belongs to the peptidase M14 family.</text>
</comment>
<name>CBPZ_CHICK</name>
<proteinExistence type="evidence at protein level"/>
<evidence type="ECO:0000250" key="1"/>
<evidence type="ECO:0000250" key="2">
    <source>
        <dbReference type="UniProtKB" id="P00730"/>
    </source>
</evidence>
<evidence type="ECO:0000255" key="3"/>
<evidence type="ECO:0000255" key="4">
    <source>
        <dbReference type="PROSITE-ProRule" id="PRU00090"/>
    </source>
</evidence>
<evidence type="ECO:0000255" key="5">
    <source>
        <dbReference type="PROSITE-ProRule" id="PRU01379"/>
    </source>
</evidence>
<evidence type="ECO:0000269" key="6">
    <source>
    </source>
</evidence>
<evidence type="ECO:0000305" key="7"/>
<sequence length="647" mass="73919">MVPSLLLLLTGLFRATEPAPRCETGQETLGQCQTAQKAKCVDISLSSCTDVTYTQTMYPNFLDQKSREVIEYSSEYILISVLHNLLQGECNPDLRLLGCSVLAPQCEKDKVIKPCRHVCENLKKNCLSAFDAIDMAWPYFLDCDRFFAGEEEGCFDPLAKLRGEVAVEEDLPSDFPATFIQFKHHSYSQMVSTLKKTASRCSHIATTYSIGRSFEGKDLFVIEFSTKPGHHELLKPEFKYIGNMHGNEVVGKELLYTLRSICVQKYLLGNPRIQTLINNTRIHLLPSLNPDGYERAAEEGAGYNGWVIGRQTAQNLDLNRNFPDLTSEAYRRAGIRGARLDHIPIPQSYWWGKVAPETKAVMKWMRSIPFVLSASLHGGELVVTYPYDYSRHPMEEKEFSPTPDEKMFKMLAKAYADAHPVISDRSEHRCGGNFVKRGGIINGAEWYSFTGGMADFNYLHTNCFEVTVEVGCEKFPLEEELFTIWHENRDALLNYMEMVHRGIKGIVSDKFGNPIKNARISVRGIQHDITTAADGDYWRLLPPGTYIVTAQAMGYTKVMKRVTLPIKMKRAGRVDFVLRPIEIWPNKLLRRPMEDMYDQYDPLELFDPHAQHAQARGGSQQVREKPWWWSYFSSLDLHKPLWLLKQH</sequence>
<organism>
    <name type="scientific">Gallus gallus</name>
    <name type="common">Chicken</name>
    <dbReference type="NCBI Taxonomy" id="9031"/>
    <lineage>
        <taxon>Eukaryota</taxon>
        <taxon>Metazoa</taxon>
        <taxon>Chordata</taxon>
        <taxon>Craniata</taxon>
        <taxon>Vertebrata</taxon>
        <taxon>Euteleostomi</taxon>
        <taxon>Archelosauria</taxon>
        <taxon>Archosauria</taxon>
        <taxon>Dinosauria</taxon>
        <taxon>Saurischia</taxon>
        <taxon>Theropoda</taxon>
        <taxon>Coelurosauria</taxon>
        <taxon>Aves</taxon>
        <taxon>Neognathae</taxon>
        <taxon>Galloanserae</taxon>
        <taxon>Galliformes</taxon>
        <taxon>Phasianidae</taxon>
        <taxon>Phasianinae</taxon>
        <taxon>Gallus</taxon>
    </lineage>
</organism>
<dbReference type="EC" id="3.4.17.-"/>
<dbReference type="EMBL" id="AF351205">
    <property type="protein sequence ID" value="AAL84280.1"/>
    <property type="molecule type" value="mRNA"/>
</dbReference>
<dbReference type="SMR" id="Q8QGP3"/>
<dbReference type="FunCoup" id="Q8QGP3">
    <property type="interactions" value="20"/>
</dbReference>
<dbReference type="STRING" id="9031.ENSGALP00000046091"/>
<dbReference type="MEROPS" id="M14.012"/>
<dbReference type="GlyCosmos" id="Q8QGP3">
    <property type="glycosylation" value="1 site, No reported glycans"/>
</dbReference>
<dbReference type="GlyGen" id="Q8QGP3">
    <property type="glycosylation" value="1 site"/>
</dbReference>
<dbReference type="PaxDb" id="9031-ENSGALP00000029089"/>
<dbReference type="VEuPathDB" id="HostDB:geneid_395266"/>
<dbReference type="eggNOG" id="KOG2649">
    <property type="taxonomic scope" value="Eukaryota"/>
</dbReference>
<dbReference type="InParanoid" id="Q8QGP3"/>
<dbReference type="OrthoDB" id="10249045at2759"/>
<dbReference type="PhylomeDB" id="Q8QGP3"/>
<dbReference type="Proteomes" id="UP000000539">
    <property type="component" value="Unassembled WGS sequence"/>
</dbReference>
<dbReference type="GO" id="GO:0005615">
    <property type="term" value="C:extracellular space"/>
    <property type="evidence" value="ECO:0000318"/>
    <property type="project" value="GO_Central"/>
</dbReference>
<dbReference type="GO" id="GO:0004181">
    <property type="term" value="F:metallocarboxypeptidase activity"/>
    <property type="evidence" value="ECO:0000318"/>
    <property type="project" value="GO_Central"/>
</dbReference>
<dbReference type="GO" id="GO:0008270">
    <property type="term" value="F:zinc ion binding"/>
    <property type="evidence" value="ECO:0007669"/>
    <property type="project" value="InterPro"/>
</dbReference>
<dbReference type="GO" id="GO:0006518">
    <property type="term" value="P:peptide metabolic process"/>
    <property type="evidence" value="ECO:0000318"/>
    <property type="project" value="GO_Central"/>
</dbReference>
<dbReference type="GO" id="GO:0016485">
    <property type="term" value="P:protein processing"/>
    <property type="evidence" value="ECO:0000318"/>
    <property type="project" value="GO_Central"/>
</dbReference>
<dbReference type="GO" id="GO:0016055">
    <property type="term" value="P:Wnt signaling pathway"/>
    <property type="evidence" value="ECO:0007669"/>
    <property type="project" value="UniProtKB-KW"/>
</dbReference>
<dbReference type="CDD" id="cd07447">
    <property type="entry name" value="CRD_Carboxypeptidase_Z"/>
    <property type="match status" value="1"/>
</dbReference>
<dbReference type="CDD" id="cd03867">
    <property type="entry name" value="M14_CPZ"/>
    <property type="match status" value="1"/>
</dbReference>
<dbReference type="CDD" id="cd11308">
    <property type="entry name" value="Peptidase_M14NE-CP-C_like"/>
    <property type="match status" value="1"/>
</dbReference>
<dbReference type="FunFam" id="1.10.2000.10:FF:000012">
    <property type="entry name" value="Carboxypeptidase Z"/>
    <property type="match status" value="1"/>
</dbReference>
<dbReference type="FunFam" id="2.60.40.1120:FF:000010">
    <property type="entry name" value="Carboxypeptidase Z"/>
    <property type="match status" value="1"/>
</dbReference>
<dbReference type="FunFam" id="3.40.630.10:FF:000022">
    <property type="entry name" value="Carboxypeptidase Z"/>
    <property type="match status" value="1"/>
</dbReference>
<dbReference type="Gene3D" id="2.60.40.1120">
    <property type="entry name" value="Carboxypeptidase-like, regulatory domain"/>
    <property type="match status" value="1"/>
</dbReference>
<dbReference type="Gene3D" id="1.10.2000.10">
    <property type="entry name" value="Frizzled cysteine-rich domain"/>
    <property type="match status" value="1"/>
</dbReference>
<dbReference type="Gene3D" id="3.40.630.10">
    <property type="entry name" value="Zn peptidases"/>
    <property type="match status" value="1"/>
</dbReference>
<dbReference type="InterPro" id="IPR008969">
    <property type="entry name" value="CarboxyPept-like_regulatory"/>
</dbReference>
<dbReference type="InterPro" id="IPR020067">
    <property type="entry name" value="Frizzled_dom"/>
</dbReference>
<dbReference type="InterPro" id="IPR036790">
    <property type="entry name" value="Frizzled_dom_sf"/>
</dbReference>
<dbReference type="InterPro" id="IPR034239">
    <property type="entry name" value="M14_CPZ_CPD"/>
</dbReference>
<dbReference type="InterPro" id="IPR000834">
    <property type="entry name" value="Peptidase_M14"/>
</dbReference>
<dbReference type="InterPro" id="IPR050753">
    <property type="entry name" value="Peptidase_M14_domain"/>
</dbReference>
<dbReference type="PANTHER" id="PTHR11532:SF63">
    <property type="entry name" value="CARBOXYPEPTIDASE Z"/>
    <property type="match status" value="1"/>
</dbReference>
<dbReference type="PANTHER" id="PTHR11532">
    <property type="entry name" value="PROTEASE M14 CARBOXYPEPTIDASE"/>
    <property type="match status" value="1"/>
</dbReference>
<dbReference type="Pfam" id="PF13620">
    <property type="entry name" value="CarboxypepD_reg"/>
    <property type="match status" value="1"/>
</dbReference>
<dbReference type="Pfam" id="PF01392">
    <property type="entry name" value="Fz"/>
    <property type="match status" value="1"/>
</dbReference>
<dbReference type="Pfam" id="PF00246">
    <property type="entry name" value="Peptidase_M14"/>
    <property type="match status" value="1"/>
</dbReference>
<dbReference type="PRINTS" id="PR00765">
    <property type="entry name" value="CRBOXYPTASEA"/>
</dbReference>
<dbReference type="SMART" id="SM00063">
    <property type="entry name" value="FRI"/>
    <property type="match status" value="1"/>
</dbReference>
<dbReference type="SMART" id="SM00631">
    <property type="entry name" value="Zn_pept"/>
    <property type="match status" value="1"/>
</dbReference>
<dbReference type="SUPFAM" id="SSF49464">
    <property type="entry name" value="Carboxypeptidase regulatory domain-like"/>
    <property type="match status" value="1"/>
</dbReference>
<dbReference type="SUPFAM" id="SSF63501">
    <property type="entry name" value="Frizzled cysteine-rich domain"/>
    <property type="match status" value="1"/>
</dbReference>
<dbReference type="SUPFAM" id="SSF53187">
    <property type="entry name" value="Zn-dependent exopeptidases"/>
    <property type="match status" value="1"/>
</dbReference>
<dbReference type="PROSITE" id="PS00132">
    <property type="entry name" value="CARBOXYPEPT_ZN_1"/>
    <property type="match status" value="1"/>
</dbReference>
<dbReference type="PROSITE" id="PS00133">
    <property type="entry name" value="CARBOXYPEPT_ZN_2"/>
    <property type="match status" value="1"/>
</dbReference>
<dbReference type="PROSITE" id="PS50038">
    <property type="entry name" value="FZ"/>
    <property type="match status" value="1"/>
</dbReference>
<dbReference type="PROSITE" id="PS52035">
    <property type="entry name" value="PEPTIDASE_M14"/>
    <property type="match status" value="1"/>
</dbReference>
<reference key="1">
    <citation type="journal article" date="2003" name="Development">
        <title>Carboxypeptidase Z (CPZ) modulates Wnt signaling and regulates the development of skeletal elements in the chicken.</title>
        <authorList>
            <person name="Moeller C."/>
            <person name="Swindell E.C."/>
            <person name="Kispert A."/>
            <person name="Eichele G."/>
        </authorList>
    </citation>
    <scope>NUCLEOTIDE SEQUENCE [MRNA]</scope>
    <scope>FUNCTION</scope>
    <scope>TISSUE SPECIFICITY</scope>
    <scope>INTERACTION WITH WNT4</scope>
</reference>
<protein>
    <recommendedName>
        <fullName>Carboxypeptidase Z</fullName>
        <shortName>CPZ</shortName>
        <shortName>cCPZ</shortName>
        <ecNumber>3.4.17.-</ecNumber>
    </recommendedName>
</protein>